<protein>
    <recommendedName>
        <fullName>Sulfate-binding protein</fullName>
    </recommendedName>
</protein>
<name>SUBI_SYNE7</name>
<feature type="signal peptide" evidence="1">
    <location>
        <begin position="1"/>
        <end position="40"/>
    </location>
</feature>
<feature type="chain" id="PRO_0000031685" description="Sulfate-binding protein">
    <location>
        <begin position="41"/>
        <end position="350"/>
    </location>
</feature>
<sequence length="350" mass="37750">MKTAWTRRSFLQSAALATATVITIAACGGNNQSSSGGSGQPVEVTLVSYAVTQAAYEQIIPKFAAQWKEKTGQEVRFNQSYGGSGSQTRAVIDGLEADVVALALESDINQIEKAGLIQPGWQQRVPNNGIITNSVVALVTQEGNPKGIKDWTDLTKPGVRIVTANPKTSGGARWNFLGAWGSVTQTGGTEEQALQFTTDIYKNVPILAKDARESTDVFTKGQADVLLNYENELILAQQKGEKVDYAIPPVNINIQGPVAVVDTYTDKHGTRKVSEAFVQFLFTPEAQAEFAKVGFRPALPEGVDPQLLAPFPKIQTWFTVADLGGWAKVQPEFFGDGGWFDKVQQAVAGR</sequence>
<evidence type="ECO:0000255" key="1"/>
<evidence type="ECO:0000305" key="2"/>
<reference key="1">
    <citation type="journal article" date="1991" name="J. Bacteriol.">
        <title>Characterization and mutagenesis of sulfur-regulated genes in a cyanobacterium: evidence for function in sulfate transport.</title>
        <authorList>
            <person name="Laudenbach D.E."/>
            <person name="Grossman A.R."/>
        </authorList>
    </citation>
    <scope>NUCLEOTIDE SEQUENCE [GENOMIC DNA]</scope>
</reference>
<reference key="2">
    <citation type="submission" date="2005-08" db="EMBL/GenBank/DDBJ databases">
        <title>Complete sequence of chromosome 1 of Synechococcus elongatus PCC 7942.</title>
        <authorList>
            <consortium name="US DOE Joint Genome Institute"/>
            <person name="Copeland A."/>
            <person name="Lucas S."/>
            <person name="Lapidus A."/>
            <person name="Barry K."/>
            <person name="Detter J.C."/>
            <person name="Glavina T."/>
            <person name="Hammon N."/>
            <person name="Israni S."/>
            <person name="Pitluck S."/>
            <person name="Schmutz J."/>
            <person name="Larimer F."/>
            <person name="Land M."/>
            <person name="Kyrpides N."/>
            <person name="Lykidis A."/>
            <person name="Golden S."/>
            <person name="Richardson P."/>
        </authorList>
    </citation>
    <scope>NUCLEOTIDE SEQUENCE [LARGE SCALE GENOMIC DNA]</scope>
    <source>
        <strain>ATCC 33912 / PCC 7942 / FACHB-805</strain>
    </source>
</reference>
<gene>
    <name type="primary">sbpA</name>
    <name type="ordered locus">Synpcc7942_1681</name>
</gene>
<comment type="function">
    <text>This protein specifically binds sulfate and is involved in its transmembrane transport.</text>
</comment>
<comment type="subcellular location">
    <subcellularLocation>
        <location>Periplasm</location>
    </subcellularLocation>
</comment>
<comment type="induction">
    <text>By sulfur deprivation.</text>
</comment>
<comment type="similarity">
    <text evidence="2">Belongs to the prokaryotic sulfate-binding protein family.</text>
</comment>
<keyword id="KW-0574">Periplasm</keyword>
<keyword id="KW-1185">Reference proteome</keyword>
<keyword id="KW-0732">Signal</keyword>
<keyword id="KW-0346">Stress response</keyword>
<keyword id="KW-0764">Sulfate transport</keyword>
<keyword id="KW-0813">Transport</keyword>
<dbReference type="EMBL" id="M65247">
    <property type="protein sequence ID" value="AAA73043.1"/>
    <property type="molecule type" value="Genomic_DNA"/>
</dbReference>
<dbReference type="EMBL" id="CP000100">
    <property type="protein sequence ID" value="ABB57711.1"/>
    <property type="molecule type" value="Genomic_DNA"/>
</dbReference>
<dbReference type="RefSeq" id="WP_011378139.1">
    <property type="nucleotide sequence ID" value="NZ_JACJTX010000001.1"/>
</dbReference>
<dbReference type="SMR" id="P27366"/>
<dbReference type="STRING" id="1140.Synpcc7942_1681"/>
<dbReference type="PaxDb" id="1140-Synpcc7942_1681"/>
<dbReference type="KEGG" id="syf:Synpcc7942_1681"/>
<dbReference type="eggNOG" id="COG1613">
    <property type="taxonomic scope" value="Bacteria"/>
</dbReference>
<dbReference type="HOGENOM" id="CLU_055615_0_1_3"/>
<dbReference type="OrthoDB" id="9802127at2"/>
<dbReference type="BioCyc" id="SYNEL:SYNPCC7942_1681-MONOMER"/>
<dbReference type="Proteomes" id="UP000889800">
    <property type="component" value="Chromosome"/>
</dbReference>
<dbReference type="GO" id="GO:0042597">
    <property type="term" value="C:periplasmic space"/>
    <property type="evidence" value="ECO:0007669"/>
    <property type="project" value="UniProtKB-SubCell"/>
</dbReference>
<dbReference type="GO" id="GO:0140104">
    <property type="term" value="F:molecular carrier activity"/>
    <property type="evidence" value="ECO:0007669"/>
    <property type="project" value="InterPro"/>
</dbReference>
<dbReference type="GO" id="GO:1901681">
    <property type="term" value="F:sulfur compound binding"/>
    <property type="evidence" value="ECO:0007669"/>
    <property type="project" value="InterPro"/>
</dbReference>
<dbReference type="GO" id="GO:1902358">
    <property type="term" value="P:sulfate transmembrane transport"/>
    <property type="evidence" value="ECO:0007669"/>
    <property type="project" value="InterPro"/>
</dbReference>
<dbReference type="CDD" id="cd01005">
    <property type="entry name" value="PBP2_CysP"/>
    <property type="match status" value="1"/>
</dbReference>
<dbReference type="Gene3D" id="3.40.190.10">
    <property type="entry name" value="Periplasmic binding protein-like II"/>
    <property type="match status" value="2"/>
</dbReference>
<dbReference type="InterPro" id="IPR000957">
    <property type="entry name" value="Sulphate/thiosulphate-bd_CS"/>
</dbReference>
<dbReference type="InterPro" id="IPR034408">
    <property type="entry name" value="Sulphate/thiosulphate_BS"/>
</dbReference>
<dbReference type="InterPro" id="IPR005669">
    <property type="entry name" value="Thiosulph/SO4-bd"/>
</dbReference>
<dbReference type="NCBIfam" id="TIGR00971">
    <property type="entry name" value="3a0106s03"/>
    <property type="match status" value="1"/>
</dbReference>
<dbReference type="PANTHER" id="PTHR30368">
    <property type="entry name" value="SULFATE-BINDING PROTEIN"/>
    <property type="match status" value="1"/>
</dbReference>
<dbReference type="PANTHER" id="PTHR30368:SF2">
    <property type="entry name" value="SULFATE-BINDING PROTEIN"/>
    <property type="match status" value="1"/>
</dbReference>
<dbReference type="Pfam" id="PF13531">
    <property type="entry name" value="SBP_bac_11"/>
    <property type="match status" value="1"/>
</dbReference>
<dbReference type="SUPFAM" id="SSF53850">
    <property type="entry name" value="Periplasmic binding protein-like II"/>
    <property type="match status" value="1"/>
</dbReference>
<dbReference type="PROSITE" id="PS00401">
    <property type="entry name" value="PROK_SULFATE_BIND_1"/>
    <property type="match status" value="1"/>
</dbReference>
<dbReference type="PROSITE" id="PS00757">
    <property type="entry name" value="PROK_SULFATE_BIND_2"/>
    <property type="match status" value="1"/>
</dbReference>
<accession>P27366</accession>
<accession>Q31MK8</accession>
<proteinExistence type="evidence at transcript level"/>
<organism>
    <name type="scientific">Synechococcus elongatus (strain ATCC 33912 / PCC 7942 / FACHB-805)</name>
    <name type="common">Anacystis nidulans R2</name>
    <dbReference type="NCBI Taxonomy" id="1140"/>
    <lineage>
        <taxon>Bacteria</taxon>
        <taxon>Bacillati</taxon>
        <taxon>Cyanobacteriota</taxon>
        <taxon>Cyanophyceae</taxon>
        <taxon>Synechococcales</taxon>
        <taxon>Synechococcaceae</taxon>
        <taxon>Synechococcus</taxon>
    </lineage>
</organism>